<reference key="1">
    <citation type="journal article" date="1995" name="DNA Res.">
        <title>Sequence analysis of the genome of the unicellular cyanobacterium Synechocystis sp. strain PCC6803. I. Sequence features in the 1 Mb region from map positions 64% to 92% of the genome.</title>
        <authorList>
            <person name="Kaneko T."/>
            <person name="Tanaka A."/>
            <person name="Sato S."/>
            <person name="Kotani H."/>
            <person name="Sazuka T."/>
            <person name="Miyajima N."/>
            <person name="Sugiura M."/>
            <person name="Tabata S."/>
        </authorList>
    </citation>
    <scope>NUCLEOTIDE SEQUENCE [LARGE SCALE GENOMIC DNA]</scope>
    <source>
        <strain>ATCC 27184 / PCC 6803 / N-1</strain>
    </source>
</reference>
<reference key="2">
    <citation type="journal article" date="1996" name="DNA Res.">
        <title>Sequence analysis of the genome of the unicellular cyanobacterium Synechocystis sp. strain PCC6803. II. Sequence determination of the entire genome and assignment of potential protein-coding regions.</title>
        <authorList>
            <person name="Kaneko T."/>
            <person name="Sato S."/>
            <person name="Kotani H."/>
            <person name="Tanaka A."/>
            <person name="Asamizu E."/>
            <person name="Nakamura Y."/>
            <person name="Miyajima N."/>
            <person name="Hirosawa M."/>
            <person name="Sugiura M."/>
            <person name="Sasamoto S."/>
            <person name="Kimura T."/>
            <person name="Hosouchi T."/>
            <person name="Matsuno A."/>
            <person name="Muraki A."/>
            <person name="Nakazaki N."/>
            <person name="Naruo K."/>
            <person name="Okumura S."/>
            <person name="Shimpo S."/>
            <person name="Takeuchi C."/>
            <person name="Wada T."/>
            <person name="Watanabe A."/>
            <person name="Yamada M."/>
            <person name="Yasuda M."/>
            <person name="Tabata S."/>
        </authorList>
    </citation>
    <scope>NUCLEOTIDE SEQUENCE [LARGE SCALE GENOMIC DNA]</scope>
    <source>
        <strain>ATCC 27184 / PCC 6803 / Kazusa</strain>
    </source>
</reference>
<proteinExistence type="inferred from homology"/>
<evidence type="ECO:0000250" key="1"/>
<evidence type="ECO:0000255" key="2">
    <source>
        <dbReference type="PROSITE-ProRule" id="PRU01007"/>
    </source>
</evidence>
<evidence type="ECO:0000305" key="3"/>
<dbReference type="EC" id="2.2.1.6"/>
<dbReference type="EMBL" id="BA000022">
    <property type="protein sequence ID" value="BAA10276.1"/>
    <property type="status" value="ALT_INIT"/>
    <property type="molecule type" value="Genomic_DNA"/>
</dbReference>
<dbReference type="PIR" id="S74358">
    <property type="entry name" value="S74358"/>
</dbReference>
<dbReference type="SMR" id="Q55141"/>
<dbReference type="FunCoup" id="Q55141">
    <property type="interactions" value="348"/>
</dbReference>
<dbReference type="IntAct" id="Q55141">
    <property type="interactions" value="2"/>
</dbReference>
<dbReference type="STRING" id="1148.gene:10499775"/>
<dbReference type="PaxDb" id="1148-1001135"/>
<dbReference type="EnsemblBacteria" id="BAA10276">
    <property type="protein sequence ID" value="BAA10276"/>
    <property type="gene ID" value="BAA10276"/>
</dbReference>
<dbReference type="KEGG" id="syn:sll0065"/>
<dbReference type="eggNOG" id="COG0440">
    <property type="taxonomic scope" value="Bacteria"/>
</dbReference>
<dbReference type="InParanoid" id="Q55141"/>
<dbReference type="PhylomeDB" id="Q55141"/>
<dbReference type="UniPathway" id="UPA00047">
    <property type="reaction ID" value="UER00055"/>
</dbReference>
<dbReference type="UniPathway" id="UPA00049">
    <property type="reaction ID" value="UER00059"/>
</dbReference>
<dbReference type="Proteomes" id="UP000001425">
    <property type="component" value="Chromosome"/>
</dbReference>
<dbReference type="GO" id="GO:0005829">
    <property type="term" value="C:cytosol"/>
    <property type="evidence" value="ECO:0000318"/>
    <property type="project" value="GO_Central"/>
</dbReference>
<dbReference type="GO" id="GO:0003984">
    <property type="term" value="F:acetolactate synthase activity"/>
    <property type="evidence" value="ECO:0000318"/>
    <property type="project" value="GO_Central"/>
</dbReference>
<dbReference type="GO" id="GO:1990610">
    <property type="term" value="F:acetolactate synthase regulator activity"/>
    <property type="evidence" value="ECO:0007669"/>
    <property type="project" value="InterPro"/>
</dbReference>
<dbReference type="GO" id="GO:0009097">
    <property type="term" value="P:isoleucine biosynthetic process"/>
    <property type="evidence" value="ECO:0000318"/>
    <property type="project" value="GO_Central"/>
</dbReference>
<dbReference type="GO" id="GO:0009099">
    <property type="term" value="P:L-valine biosynthetic process"/>
    <property type="evidence" value="ECO:0000318"/>
    <property type="project" value="GO_Central"/>
</dbReference>
<dbReference type="CDD" id="cd04878">
    <property type="entry name" value="ACT_AHAS"/>
    <property type="match status" value="1"/>
</dbReference>
<dbReference type="FunFam" id="3.30.70.1150:FF:000001">
    <property type="entry name" value="Acetolactate synthase small subunit"/>
    <property type="match status" value="1"/>
</dbReference>
<dbReference type="FunFam" id="3.30.70.260:FF:000001">
    <property type="entry name" value="Acetolactate synthase, small subunit"/>
    <property type="match status" value="1"/>
</dbReference>
<dbReference type="Gene3D" id="3.30.70.260">
    <property type="match status" value="1"/>
</dbReference>
<dbReference type="Gene3D" id="3.30.70.1150">
    <property type="entry name" value="ACT-like. Chain A, domain 2"/>
    <property type="match status" value="1"/>
</dbReference>
<dbReference type="InterPro" id="IPR004789">
    <property type="entry name" value="Acetalactate_synth_ssu"/>
</dbReference>
<dbReference type="InterPro" id="IPR027271">
    <property type="entry name" value="Acetolactate_synth/TF_NikR_C"/>
</dbReference>
<dbReference type="InterPro" id="IPR019455">
    <property type="entry name" value="Acetolactate_synth_ssu_C"/>
</dbReference>
<dbReference type="InterPro" id="IPR045865">
    <property type="entry name" value="ACT-like_dom_sf"/>
</dbReference>
<dbReference type="InterPro" id="IPR002912">
    <property type="entry name" value="ACT_dom"/>
</dbReference>
<dbReference type="InterPro" id="IPR039557">
    <property type="entry name" value="AHAS_ACT"/>
</dbReference>
<dbReference type="InterPro" id="IPR054480">
    <property type="entry name" value="AHAS_small-like_ACT"/>
</dbReference>
<dbReference type="NCBIfam" id="TIGR00119">
    <property type="entry name" value="acolac_sm"/>
    <property type="match status" value="1"/>
</dbReference>
<dbReference type="NCBIfam" id="NF008864">
    <property type="entry name" value="PRK11895.1"/>
    <property type="match status" value="1"/>
</dbReference>
<dbReference type="PANTHER" id="PTHR30239">
    <property type="entry name" value="ACETOLACTATE SYNTHASE SMALL SUBUNIT"/>
    <property type="match status" value="1"/>
</dbReference>
<dbReference type="PANTHER" id="PTHR30239:SF0">
    <property type="entry name" value="ACETOLACTATE SYNTHASE SMALL SUBUNIT 1, CHLOROPLASTIC"/>
    <property type="match status" value="1"/>
</dbReference>
<dbReference type="Pfam" id="PF22629">
    <property type="entry name" value="ACT_AHAS_ss"/>
    <property type="match status" value="1"/>
</dbReference>
<dbReference type="Pfam" id="PF10369">
    <property type="entry name" value="ALS_ss_C"/>
    <property type="match status" value="1"/>
</dbReference>
<dbReference type="SUPFAM" id="SSF55021">
    <property type="entry name" value="ACT-like"/>
    <property type="match status" value="2"/>
</dbReference>
<dbReference type="PROSITE" id="PS51671">
    <property type="entry name" value="ACT"/>
    <property type="match status" value="1"/>
</dbReference>
<gene>
    <name type="primary">ilvH</name>
    <name type="synonym">ilvN</name>
    <name type="ordered locus">sll0065</name>
</gene>
<organism>
    <name type="scientific">Synechocystis sp. (strain ATCC 27184 / PCC 6803 / Kazusa)</name>
    <dbReference type="NCBI Taxonomy" id="1111708"/>
    <lineage>
        <taxon>Bacteria</taxon>
        <taxon>Bacillati</taxon>
        <taxon>Cyanobacteriota</taxon>
        <taxon>Cyanophyceae</taxon>
        <taxon>Synechococcales</taxon>
        <taxon>Merismopediaceae</taxon>
        <taxon>Synechocystis</taxon>
    </lineage>
</organism>
<feature type="chain" id="PRO_0000151418" description="Acetolactate synthase small subunit">
    <location>
        <begin position="1"/>
        <end position="172"/>
    </location>
</feature>
<feature type="domain" description="ACT" evidence="2">
    <location>
        <begin position="4"/>
        <end position="78"/>
    </location>
</feature>
<name>ILVH_SYNY3</name>
<protein>
    <recommendedName>
        <fullName>Acetolactate synthase small subunit</fullName>
        <ecNumber>2.2.1.6</ecNumber>
    </recommendedName>
    <alternativeName>
        <fullName>Acetohydroxy-acid synthase small subunit</fullName>
        <shortName>AHAS</shortName>
        <shortName>ALS</shortName>
    </alternativeName>
</protein>
<keyword id="KW-0028">Amino-acid biosynthesis</keyword>
<keyword id="KW-0100">Branched-chain amino acid biosynthesis</keyword>
<keyword id="KW-1185">Reference proteome</keyword>
<keyword id="KW-0808">Transferase</keyword>
<accession>Q55141</accession>
<comment type="catalytic activity">
    <reaction>
        <text>2 pyruvate + H(+) = (2S)-2-acetolactate + CO2</text>
        <dbReference type="Rhea" id="RHEA:25249"/>
        <dbReference type="ChEBI" id="CHEBI:15361"/>
        <dbReference type="ChEBI" id="CHEBI:15378"/>
        <dbReference type="ChEBI" id="CHEBI:16526"/>
        <dbReference type="ChEBI" id="CHEBI:58476"/>
        <dbReference type="EC" id="2.2.1.6"/>
    </reaction>
</comment>
<comment type="pathway">
    <text>Amino-acid biosynthesis; L-isoleucine biosynthesis; L-isoleucine from 2-oxobutanoate: step 1/4.</text>
</comment>
<comment type="pathway">
    <text>Amino-acid biosynthesis; L-valine biosynthesis; L-valine from pyruvate: step 1/4.</text>
</comment>
<comment type="subunit">
    <text evidence="1">Dimer of large and small chains.</text>
</comment>
<comment type="similarity">
    <text evidence="3">Belongs to the acetolactate synthase small subunit family.</text>
</comment>
<comment type="sequence caution" evidence="3">
    <conflict type="erroneous initiation">
        <sequence resource="EMBL-CDS" id="BAA10276"/>
    </conflict>
</comment>
<sequence>MKHTLSVLVEDEAGVLTRIAGLFARRGFNIESLAVGSAEQGDVSRITMVVPGDENTIEQLTKQLYKLVNVIKVQDITETPCVERELMLVKVSANAPNRAEVIELAQVFRARIVDISEDTVTIEVVGDPGKMVAILQMLAKFGIKEVARTGKIALVRESGVNTEYLKSLESKF</sequence>